<name>NFYB8_ORYSJ</name>
<organism>
    <name type="scientific">Oryza sativa subsp. japonica</name>
    <name type="common">Rice</name>
    <dbReference type="NCBI Taxonomy" id="39947"/>
    <lineage>
        <taxon>Eukaryota</taxon>
        <taxon>Viridiplantae</taxon>
        <taxon>Streptophyta</taxon>
        <taxon>Embryophyta</taxon>
        <taxon>Tracheophyta</taxon>
        <taxon>Spermatophyta</taxon>
        <taxon>Magnoliopsida</taxon>
        <taxon>Liliopsida</taxon>
        <taxon>Poales</taxon>
        <taxon>Poaceae</taxon>
        <taxon>BOP clade</taxon>
        <taxon>Oryzoideae</taxon>
        <taxon>Oryzeae</taxon>
        <taxon>Oryzinae</taxon>
        <taxon>Oryza</taxon>
        <taxon>Oryza sativa</taxon>
    </lineage>
</organism>
<feature type="chain" id="PRO_0000437432" description="Nuclear transcription factor Y subunit B-8">
    <location>
        <begin position="1"/>
        <end position="219"/>
    </location>
</feature>
<feature type="DNA-binding region" evidence="1">
    <location>
        <begin position="29"/>
        <end position="35"/>
    </location>
</feature>
<feature type="region of interest" description="Disordered" evidence="2">
    <location>
        <begin position="1"/>
        <end position="26"/>
    </location>
</feature>
<feature type="region of interest" description="Subunit association domain (SAD)" evidence="1">
    <location>
        <begin position="56"/>
        <end position="67"/>
    </location>
</feature>
<feature type="region of interest" description="Disordered" evidence="2">
    <location>
        <begin position="119"/>
        <end position="142"/>
    </location>
</feature>
<feature type="region of interest" description="Disordered" evidence="2">
    <location>
        <begin position="166"/>
        <end position="219"/>
    </location>
</feature>
<feature type="compositionally biased region" description="Low complexity" evidence="2">
    <location>
        <begin position="119"/>
        <end position="134"/>
    </location>
</feature>
<feature type="compositionally biased region" description="Gly residues" evidence="2">
    <location>
        <begin position="190"/>
        <end position="206"/>
    </location>
</feature>
<reference key="1">
    <citation type="journal article" date="2008" name="Mol. Genet. Genomics">
        <title>Identification, characterization and interaction of HAP family genes in rice.</title>
        <authorList>
            <person name="Thirumurugan T."/>
            <person name="Ito Y."/>
            <person name="Kubo T."/>
            <person name="Serizawa A."/>
            <person name="Kurata N."/>
        </authorList>
    </citation>
    <scope>NUCLEOTIDE SEQUENCE [GENOMIC DNA]</scope>
    <source>
        <strain>cv. Nipponbare</strain>
    </source>
</reference>
<reference key="2">
    <citation type="journal article" date="2005" name="Genome Res.">
        <title>Sequence, annotation, and analysis of synteny between rice chromosome 3 and diverged grass species.</title>
        <authorList>
            <consortium name="The rice chromosome 3 sequencing consortium"/>
            <person name="Buell C.R."/>
            <person name="Yuan Q."/>
            <person name="Ouyang S."/>
            <person name="Liu J."/>
            <person name="Zhu W."/>
            <person name="Wang A."/>
            <person name="Maiti R."/>
            <person name="Haas B."/>
            <person name="Wortman J."/>
            <person name="Pertea M."/>
            <person name="Jones K.M."/>
            <person name="Kim M."/>
            <person name="Overton L."/>
            <person name="Tsitrin T."/>
            <person name="Fadrosh D."/>
            <person name="Bera J."/>
            <person name="Weaver B."/>
            <person name="Jin S."/>
            <person name="Johri S."/>
            <person name="Reardon M."/>
            <person name="Webb K."/>
            <person name="Hill J."/>
            <person name="Moffat K."/>
            <person name="Tallon L."/>
            <person name="Van Aken S."/>
            <person name="Lewis M."/>
            <person name="Utterback T."/>
            <person name="Feldblyum T."/>
            <person name="Zismann V."/>
            <person name="Iobst S."/>
            <person name="Hsiao J."/>
            <person name="de Vazeille A.R."/>
            <person name="Salzberg S.L."/>
            <person name="White O."/>
            <person name="Fraser C.M."/>
            <person name="Yu Y."/>
            <person name="Kim H."/>
            <person name="Rambo T."/>
            <person name="Currie J."/>
            <person name="Collura K."/>
            <person name="Kernodle-Thompson S."/>
            <person name="Wei F."/>
            <person name="Kudrna K."/>
            <person name="Ammiraju J.S.S."/>
            <person name="Luo M."/>
            <person name="Goicoechea J.L."/>
            <person name="Wing R.A."/>
            <person name="Henry D."/>
            <person name="Oates R."/>
            <person name="Palmer M."/>
            <person name="Pries G."/>
            <person name="Saski C."/>
            <person name="Simmons J."/>
            <person name="Soderlund C."/>
            <person name="Nelson W."/>
            <person name="de la Bastide M."/>
            <person name="Spiegel L."/>
            <person name="Nascimento L."/>
            <person name="Huang E."/>
            <person name="Preston R."/>
            <person name="Zutavern T."/>
            <person name="Palmer L."/>
            <person name="O'Shaughnessy A."/>
            <person name="Dike S."/>
            <person name="McCombie W.R."/>
            <person name="Minx P."/>
            <person name="Cordum H."/>
            <person name="Wilson R."/>
            <person name="Jin W."/>
            <person name="Lee H.R."/>
            <person name="Jiang J."/>
            <person name="Jackson S."/>
        </authorList>
    </citation>
    <scope>NUCLEOTIDE SEQUENCE [LARGE SCALE GENOMIC DNA]</scope>
    <source>
        <strain>cv. Nipponbare</strain>
    </source>
</reference>
<reference key="3">
    <citation type="journal article" date="2005" name="Nature">
        <title>The map-based sequence of the rice genome.</title>
        <authorList>
            <consortium name="International rice genome sequencing project (IRGSP)"/>
        </authorList>
    </citation>
    <scope>NUCLEOTIDE SEQUENCE [LARGE SCALE GENOMIC DNA]</scope>
    <source>
        <strain>cv. Nipponbare</strain>
    </source>
</reference>
<reference key="4">
    <citation type="journal article" date="2008" name="Nucleic Acids Res.">
        <title>The rice annotation project database (RAP-DB): 2008 update.</title>
        <authorList>
            <consortium name="The rice annotation project (RAP)"/>
        </authorList>
    </citation>
    <scope>GENOME REANNOTATION</scope>
    <source>
        <strain>cv. Nipponbare</strain>
    </source>
</reference>
<reference key="5">
    <citation type="journal article" date="2013" name="Rice">
        <title>Improvement of the Oryza sativa Nipponbare reference genome using next generation sequence and optical map data.</title>
        <authorList>
            <person name="Kawahara Y."/>
            <person name="de la Bastide M."/>
            <person name="Hamilton J.P."/>
            <person name="Kanamori H."/>
            <person name="McCombie W.R."/>
            <person name="Ouyang S."/>
            <person name="Schwartz D.C."/>
            <person name="Tanaka T."/>
            <person name="Wu J."/>
            <person name="Zhou S."/>
            <person name="Childs K.L."/>
            <person name="Davidson R.M."/>
            <person name="Lin H."/>
            <person name="Quesada-Ocampo L."/>
            <person name="Vaillancourt B."/>
            <person name="Sakai H."/>
            <person name="Lee S.S."/>
            <person name="Kim J."/>
            <person name="Numa H."/>
            <person name="Itoh T."/>
            <person name="Buell C.R."/>
            <person name="Matsumoto T."/>
        </authorList>
    </citation>
    <scope>GENOME REANNOTATION</scope>
    <source>
        <strain>cv. Nipponbare</strain>
    </source>
</reference>
<reference key="6">
    <citation type="journal article" date="2003" name="Science">
        <title>Collection, mapping, and annotation of over 28,000 cDNA clones from japonica rice.</title>
        <authorList>
            <consortium name="The rice full-length cDNA consortium"/>
        </authorList>
    </citation>
    <scope>NUCLEOTIDE SEQUENCE [LARGE SCALE MRNA]</scope>
    <source>
        <strain>cv. Nipponbare</strain>
    </source>
</reference>
<reference key="7">
    <citation type="journal article" date="2016" name="Planta">
        <title>OsNF-YC2 and OsNF-YC4 proteins inhibit flowering under long-day conditions in rice.</title>
        <authorList>
            <person name="Kim S.K."/>
            <person name="Park H.Y."/>
            <person name="Jang Y.H."/>
            <person name="Lee K.C."/>
            <person name="Chung Y.S."/>
            <person name="Lee J.H."/>
            <person name="Kim J.K."/>
        </authorList>
    </citation>
    <scope>INTERACTION WITH NFYC2; NFYC4 AND NFYC6</scope>
    <scope>SUBCELLULAR LOCATION</scope>
</reference>
<dbReference type="EMBL" id="AB288040">
    <property type="protein sequence ID" value="BAF64448.1"/>
    <property type="molecule type" value="Genomic_DNA"/>
</dbReference>
<dbReference type="EMBL" id="AC120529">
    <property type="protein sequence ID" value="AAS07059.1"/>
    <property type="molecule type" value="Genomic_DNA"/>
</dbReference>
<dbReference type="EMBL" id="DP000009">
    <property type="protein sequence ID" value="ABF96585.1"/>
    <property type="molecule type" value="Genomic_DNA"/>
</dbReference>
<dbReference type="EMBL" id="AP008209">
    <property type="protein sequence ID" value="BAF12272.1"/>
    <property type="molecule type" value="Genomic_DNA"/>
</dbReference>
<dbReference type="EMBL" id="AP014959">
    <property type="protein sequence ID" value="BAS84677.1"/>
    <property type="molecule type" value="Genomic_DNA"/>
</dbReference>
<dbReference type="EMBL" id="AK060225">
    <property type="protein sequence ID" value="BAG87374.1"/>
    <property type="molecule type" value="mRNA"/>
</dbReference>
<dbReference type="RefSeq" id="XP_015631006.1">
    <property type="nucleotide sequence ID" value="XM_015775520.1"/>
</dbReference>
<dbReference type="SMR" id="Q75IZ7"/>
<dbReference type="FunCoup" id="Q75IZ7">
    <property type="interactions" value="588"/>
</dbReference>
<dbReference type="STRING" id="39947.Q75IZ7"/>
<dbReference type="PaxDb" id="39947-Q75IZ7"/>
<dbReference type="EnsemblPlants" id="Os03t0413000-01">
    <property type="protein sequence ID" value="Os03t0413000-01"/>
    <property type="gene ID" value="Os03g0413000"/>
</dbReference>
<dbReference type="Gramene" id="Os03t0413000-01">
    <property type="protein sequence ID" value="Os03t0413000-01"/>
    <property type="gene ID" value="Os03g0413000"/>
</dbReference>
<dbReference type="KEGG" id="dosa:Os03g0413000"/>
<dbReference type="eggNOG" id="KOG0869">
    <property type="taxonomic scope" value="Eukaryota"/>
</dbReference>
<dbReference type="HOGENOM" id="CLU_066247_1_0_1"/>
<dbReference type="InParanoid" id="Q75IZ7"/>
<dbReference type="OMA" id="QHHMAMG"/>
<dbReference type="OrthoDB" id="386949at2759"/>
<dbReference type="Proteomes" id="UP000000763">
    <property type="component" value="Chromosome 3"/>
</dbReference>
<dbReference type="Proteomes" id="UP000059680">
    <property type="component" value="Chromosome 3"/>
</dbReference>
<dbReference type="GO" id="GO:0016602">
    <property type="term" value="C:CCAAT-binding factor complex"/>
    <property type="evidence" value="ECO:0000318"/>
    <property type="project" value="GO_Central"/>
</dbReference>
<dbReference type="GO" id="GO:0005737">
    <property type="term" value="C:cytoplasm"/>
    <property type="evidence" value="ECO:0000314"/>
    <property type="project" value="UniProtKB"/>
</dbReference>
<dbReference type="GO" id="GO:0001228">
    <property type="term" value="F:DNA-binding transcription activator activity, RNA polymerase II-specific"/>
    <property type="evidence" value="ECO:0007669"/>
    <property type="project" value="InterPro"/>
</dbReference>
<dbReference type="GO" id="GO:0000981">
    <property type="term" value="F:DNA-binding transcription factor activity, RNA polymerase II-specific"/>
    <property type="evidence" value="ECO:0000318"/>
    <property type="project" value="GO_Central"/>
</dbReference>
<dbReference type="GO" id="GO:0046982">
    <property type="term" value="F:protein heterodimerization activity"/>
    <property type="evidence" value="ECO:0007669"/>
    <property type="project" value="InterPro"/>
</dbReference>
<dbReference type="GO" id="GO:0043565">
    <property type="term" value="F:sequence-specific DNA binding"/>
    <property type="evidence" value="ECO:0007669"/>
    <property type="project" value="InterPro"/>
</dbReference>
<dbReference type="GO" id="GO:0006357">
    <property type="term" value="P:regulation of transcription by RNA polymerase II"/>
    <property type="evidence" value="ECO:0000318"/>
    <property type="project" value="GO_Central"/>
</dbReference>
<dbReference type="CDD" id="cd22907">
    <property type="entry name" value="HFD_NFYB"/>
    <property type="match status" value="1"/>
</dbReference>
<dbReference type="FunFam" id="1.10.20.10:FF:000035">
    <property type="entry name" value="Nuclear transcription factor Y subunit B-3"/>
    <property type="match status" value="1"/>
</dbReference>
<dbReference type="Gene3D" id="1.10.20.10">
    <property type="entry name" value="Histone, subunit A"/>
    <property type="match status" value="1"/>
</dbReference>
<dbReference type="InterPro" id="IPR003958">
    <property type="entry name" value="CBFA_NFYB_domain"/>
</dbReference>
<dbReference type="InterPro" id="IPR009072">
    <property type="entry name" value="Histone-fold"/>
</dbReference>
<dbReference type="InterPro" id="IPR027113">
    <property type="entry name" value="Transc_fact_NFYB/HAP3"/>
</dbReference>
<dbReference type="InterPro" id="IPR003956">
    <property type="entry name" value="Transcrpt_fac_NFYB/HAP3_CS"/>
</dbReference>
<dbReference type="PANTHER" id="PTHR11064">
    <property type="entry name" value="CCAAT-BINDING TRANSCRIPTION FACTOR-RELATED"/>
    <property type="match status" value="1"/>
</dbReference>
<dbReference type="PANTHER" id="PTHR11064:SF9">
    <property type="entry name" value="NUCLEAR TRANSCRIPTION FACTOR Y SUBUNIT BETA"/>
    <property type="match status" value="1"/>
</dbReference>
<dbReference type="Pfam" id="PF00808">
    <property type="entry name" value="CBFD_NFYB_HMF"/>
    <property type="match status" value="1"/>
</dbReference>
<dbReference type="PRINTS" id="PR00615">
    <property type="entry name" value="CCAATSUBUNTA"/>
</dbReference>
<dbReference type="SUPFAM" id="SSF47113">
    <property type="entry name" value="Histone-fold"/>
    <property type="match status" value="1"/>
</dbReference>
<dbReference type="PROSITE" id="PS00685">
    <property type="entry name" value="NFYB_HAP3"/>
    <property type="match status" value="1"/>
</dbReference>
<evidence type="ECO:0000250" key="1"/>
<evidence type="ECO:0000256" key="2">
    <source>
        <dbReference type="SAM" id="MobiDB-lite"/>
    </source>
</evidence>
<evidence type="ECO:0000269" key="3">
    <source>
    </source>
</evidence>
<evidence type="ECO:0000303" key="4">
    <source>
    </source>
</evidence>
<evidence type="ECO:0000303" key="5">
    <source>
    </source>
</evidence>
<evidence type="ECO:0000305" key="6"/>
<evidence type="ECO:0000312" key="7">
    <source>
        <dbReference type="EMBL" id="ABF96585.1"/>
    </source>
</evidence>
<evidence type="ECO:0000312" key="8">
    <source>
        <dbReference type="EMBL" id="BAF12272.1"/>
    </source>
</evidence>
<gene>
    <name evidence="6" type="primary">NFYB8</name>
    <name evidence="4" type="synonym">HAP3I</name>
    <name evidence="8" type="ordered locus">Os03g0413000</name>
    <name evidence="7" type="ordered locus">LOC_Os03g29970</name>
</gene>
<accession>Q75IZ7</accession>
<proteinExistence type="evidence at protein level"/>
<protein>
    <recommendedName>
        <fullName evidence="6">Nuclear transcription factor Y subunit B-8</fullName>
        <shortName evidence="5">OsNF-YB8</shortName>
    </recommendedName>
    <alternativeName>
        <fullName evidence="6">Transcriptional activator HAP3I</fullName>
        <shortName evidence="4">OsHAP3I</shortName>
    </alternativeName>
</protein>
<comment type="function">
    <text evidence="1">Component of the NF-Y/HAP transcription factor complex.</text>
</comment>
<comment type="subunit">
    <text evidence="1 3">Heterotrimeric transcription factor composed of three components, NF-YA, NF-YB and NF-YC. NF-YB and NF-YC must interact and dimerize for NF-YA association and DNA binding (By similarity). Interacts with NFYC2, NFYC4 and NFYC6 (PubMed:26542958).</text>
</comment>
<comment type="subcellular location">
    <subcellularLocation>
        <location evidence="3">Cytoplasm</location>
    </subcellularLocation>
</comment>
<comment type="similarity">
    <text evidence="6">Belongs to the NFYB/HAP3 subunit family.</text>
</comment>
<sequence length="219" mass="22986">MPDSDNDSGGPSNYAGGELSSPREQDRFLPIANVSRIMKKALPANAKISKDAKETVQECVSEFISFITGEASDKCQREKRKTINGDDLLWAMTTLGFEDYVDPLKHYLHKFREIEGERAAASTTGAGTSAASTTPPQQQHTANAAGGYAGYAAPGAGPGGMMMMMGQPMYGSPPPPPQQQQQQHHHMAMGGRGGFGHHPGGGGGGSSSSSGHGRQNRGA</sequence>
<keyword id="KW-0963">Cytoplasm</keyword>
<keyword id="KW-0238">DNA-binding</keyword>
<keyword id="KW-1185">Reference proteome</keyword>
<keyword id="KW-0804">Transcription</keyword>
<keyword id="KW-0805">Transcription regulation</keyword>